<protein>
    <recommendedName>
        <fullName>WD repeat-containing protein 76</fullName>
    </recommendedName>
</protein>
<feature type="chain" id="PRO_0000351092" description="WD repeat-containing protein 76">
    <location>
        <begin position="1"/>
        <end position="622"/>
    </location>
</feature>
<feature type="repeat" description="WD 1">
    <location>
        <begin position="310"/>
        <end position="351"/>
    </location>
</feature>
<feature type="repeat" description="WD 2">
    <location>
        <begin position="356"/>
        <end position="398"/>
    </location>
</feature>
<feature type="repeat" description="WD 3">
    <location>
        <begin position="400"/>
        <end position="438"/>
    </location>
</feature>
<feature type="repeat" description="WD 4">
    <location>
        <begin position="443"/>
        <end position="482"/>
    </location>
</feature>
<feature type="repeat" description="WD 5">
    <location>
        <begin position="490"/>
        <end position="530"/>
    </location>
</feature>
<feature type="repeat" description="WD 6">
    <location>
        <begin position="540"/>
        <end position="584"/>
    </location>
</feature>
<feature type="repeat" description="WD 7">
    <location>
        <begin position="587"/>
        <end position="622"/>
    </location>
</feature>
<feature type="region of interest" description="Disordered" evidence="2">
    <location>
        <begin position="75"/>
        <end position="94"/>
    </location>
</feature>
<feature type="region of interest" description="Disordered" evidence="2">
    <location>
        <begin position="120"/>
        <end position="155"/>
    </location>
</feature>
<feature type="region of interest" description="Disordered" evidence="2">
    <location>
        <begin position="189"/>
        <end position="209"/>
    </location>
</feature>
<feature type="compositionally biased region" description="Basic residues" evidence="2">
    <location>
        <begin position="80"/>
        <end position="94"/>
    </location>
</feature>
<feature type="splice variant" id="VSP_035463" description="In isoform 2." evidence="4">
    <location>
        <begin position="1"/>
        <end position="98"/>
    </location>
</feature>
<feature type="splice variant" id="VSP_035464" description="In isoform 3." evidence="5">
    <original>E</original>
    <variation>ETLVSLLVGVACCPSLN</variation>
    <location>
        <position position="181"/>
    </location>
</feature>
<feature type="splice variant" id="VSP_035465" description="In isoform 3." evidence="5">
    <original>YRNEGN</original>
    <variation>GSDQEA</variation>
    <location>
        <begin position="397"/>
        <end position="402"/>
    </location>
</feature>
<feature type="splice variant" id="VSP_035466" description="In isoform 3." evidence="5">
    <location>
        <begin position="403"/>
        <end position="622"/>
    </location>
</feature>
<feature type="sequence conflict" description="In Ref. 1; BAB31961." evidence="6" ref="1">
    <original>S</original>
    <variation>Y</variation>
    <location>
        <position position="335"/>
    </location>
</feature>
<feature type="sequence conflict" description="In Ref. 3; AAI17823." evidence="6" ref="3">
    <original>I</original>
    <variation>V</variation>
    <location>
        <position position="535"/>
    </location>
</feature>
<keyword id="KW-0025">Alternative splicing</keyword>
<keyword id="KW-1185">Reference proteome</keyword>
<keyword id="KW-0677">Repeat</keyword>
<keyword id="KW-0853">WD repeat</keyword>
<comment type="function">
    <text evidence="3">Specifically binds 5-hydroxymethylcytosine (5hmC), suggesting that it acts as a specific reader of 5hmC.</text>
</comment>
<comment type="subunit">
    <text evidence="1">Interacts with CUL4A and/or CUL4B.</text>
</comment>
<comment type="alternative products">
    <event type="alternative splicing"/>
    <isoform>
        <id>A6PWY4-1</id>
        <name>1</name>
        <sequence type="displayed"/>
    </isoform>
    <isoform>
        <id>A6PWY4-2</id>
        <name>2</name>
        <sequence type="described" ref="VSP_035463"/>
    </isoform>
    <isoform>
        <id>A6PWY4-3</id>
        <name>3</name>
        <sequence type="described" ref="VSP_035464 VSP_035465 VSP_035466"/>
    </isoform>
</comment>
<comment type="similarity">
    <text evidence="6">Belongs to the WD repeat DDB2/WDR76 family.</text>
</comment>
<gene>
    <name type="primary">Wdr76</name>
</gene>
<proteinExistence type="evidence at protein level"/>
<reference key="1">
    <citation type="journal article" date="2005" name="Science">
        <title>The transcriptional landscape of the mammalian genome.</title>
        <authorList>
            <person name="Carninci P."/>
            <person name="Kasukawa T."/>
            <person name="Katayama S."/>
            <person name="Gough J."/>
            <person name="Frith M.C."/>
            <person name="Maeda N."/>
            <person name="Oyama R."/>
            <person name="Ravasi T."/>
            <person name="Lenhard B."/>
            <person name="Wells C."/>
            <person name="Kodzius R."/>
            <person name="Shimokawa K."/>
            <person name="Bajic V.B."/>
            <person name="Brenner S.E."/>
            <person name="Batalov S."/>
            <person name="Forrest A.R."/>
            <person name="Zavolan M."/>
            <person name="Davis M.J."/>
            <person name="Wilming L.G."/>
            <person name="Aidinis V."/>
            <person name="Allen J.E."/>
            <person name="Ambesi-Impiombato A."/>
            <person name="Apweiler R."/>
            <person name="Aturaliya R.N."/>
            <person name="Bailey T.L."/>
            <person name="Bansal M."/>
            <person name="Baxter L."/>
            <person name="Beisel K.W."/>
            <person name="Bersano T."/>
            <person name="Bono H."/>
            <person name="Chalk A.M."/>
            <person name="Chiu K.P."/>
            <person name="Choudhary V."/>
            <person name="Christoffels A."/>
            <person name="Clutterbuck D.R."/>
            <person name="Crowe M.L."/>
            <person name="Dalla E."/>
            <person name="Dalrymple B.P."/>
            <person name="de Bono B."/>
            <person name="Della Gatta G."/>
            <person name="di Bernardo D."/>
            <person name="Down T."/>
            <person name="Engstrom P."/>
            <person name="Fagiolini M."/>
            <person name="Faulkner G."/>
            <person name="Fletcher C.F."/>
            <person name="Fukushima T."/>
            <person name="Furuno M."/>
            <person name="Futaki S."/>
            <person name="Gariboldi M."/>
            <person name="Georgii-Hemming P."/>
            <person name="Gingeras T.R."/>
            <person name="Gojobori T."/>
            <person name="Green R.E."/>
            <person name="Gustincich S."/>
            <person name="Harbers M."/>
            <person name="Hayashi Y."/>
            <person name="Hensch T.K."/>
            <person name="Hirokawa N."/>
            <person name="Hill D."/>
            <person name="Huminiecki L."/>
            <person name="Iacono M."/>
            <person name="Ikeo K."/>
            <person name="Iwama A."/>
            <person name="Ishikawa T."/>
            <person name="Jakt M."/>
            <person name="Kanapin A."/>
            <person name="Katoh M."/>
            <person name="Kawasawa Y."/>
            <person name="Kelso J."/>
            <person name="Kitamura H."/>
            <person name="Kitano H."/>
            <person name="Kollias G."/>
            <person name="Krishnan S.P."/>
            <person name="Kruger A."/>
            <person name="Kummerfeld S.K."/>
            <person name="Kurochkin I.V."/>
            <person name="Lareau L.F."/>
            <person name="Lazarevic D."/>
            <person name="Lipovich L."/>
            <person name="Liu J."/>
            <person name="Liuni S."/>
            <person name="McWilliam S."/>
            <person name="Madan Babu M."/>
            <person name="Madera M."/>
            <person name="Marchionni L."/>
            <person name="Matsuda H."/>
            <person name="Matsuzawa S."/>
            <person name="Miki H."/>
            <person name="Mignone F."/>
            <person name="Miyake S."/>
            <person name="Morris K."/>
            <person name="Mottagui-Tabar S."/>
            <person name="Mulder N."/>
            <person name="Nakano N."/>
            <person name="Nakauchi H."/>
            <person name="Ng P."/>
            <person name="Nilsson R."/>
            <person name="Nishiguchi S."/>
            <person name="Nishikawa S."/>
            <person name="Nori F."/>
            <person name="Ohara O."/>
            <person name="Okazaki Y."/>
            <person name="Orlando V."/>
            <person name="Pang K.C."/>
            <person name="Pavan W.J."/>
            <person name="Pavesi G."/>
            <person name="Pesole G."/>
            <person name="Petrovsky N."/>
            <person name="Piazza S."/>
            <person name="Reed J."/>
            <person name="Reid J.F."/>
            <person name="Ring B.Z."/>
            <person name="Ringwald M."/>
            <person name="Rost B."/>
            <person name="Ruan Y."/>
            <person name="Salzberg S.L."/>
            <person name="Sandelin A."/>
            <person name="Schneider C."/>
            <person name="Schoenbach C."/>
            <person name="Sekiguchi K."/>
            <person name="Semple C.A."/>
            <person name="Seno S."/>
            <person name="Sessa L."/>
            <person name="Sheng Y."/>
            <person name="Shibata Y."/>
            <person name="Shimada H."/>
            <person name="Shimada K."/>
            <person name="Silva D."/>
            <person name="Sinclair B."/>
            <person name="Sperling S."/>
            <person name="Stupka E."/>
            <person name="Sugiura K."/>
            <person name="Sultana R."/>
            <person name="Takenaka Y."/>
            <person name="Taki K."/>
            <person name="Tammoja K."/>
            <person name="Tan S.L."/>
            <person name="Tang S."/>
            <person name="Taylor M.S."/>
            <person name="Tegner J."/>
            <person name="Teichmann S.A."/>
            <person name="Ueda H.R."/>
            <person name="van Nimwegen E."/>
            <person name="Verardo R."/>
            <person name="Wei C.L."/>
            <person name="Yagi K."/>
            <person name="Yamanishi H."/>
            <person name="Zabarovsky E."/>
            <person name="Zhu S."/>
            <person name="Zimmer A."/>
            <person name="Hide W."/>
            <person name="Bult C."/>
            <person name="Grimmond S.M."/>
            <person name="Teasdale R.D."/>
            <person name="Liu E.T."/>
            <person name="Brusic V."/>
            <person name="Quackenbush J."/>
            <person name="Wahlestedt C."/>
            <person name="Mattick J.S."/>
            <person name="Hume D.A."/>
            <person name="Kai C."/>
            <person name="Sasaki D."/>
            <person name="Tomaru Y."/>
            <person name="Fukuda S."/>
            <person name="Kanamori-Katayama M."/>
            <person name="Suzuki M."/>
            <person name="Aoki J."/>
            <person name="Arakawa T."/>
            <person name="Iida J."/>
            <person name="Imamura K."/>
            <person name="Itoh M."/>
            <person name="Kato T."/>
            <person name="Kawaji H."/>
            <person name="Kawagashira N."/>
            <person name="Kawashima T."/>
            <person name="Kojima M."/>
            <person name="Kondo S."/>
            <person name="Konno H."/>
            <person name="Nakano K."/>
            <person name="Ninomiya N."/>
            <person name="Nishio T."/>
            <person name="Okada M."/>
            <person name="Plessy C."/>
            <person name="Shibata K."/>
            <person name="Shiraki T."/>
            <person name="Suzuki S."/>
            <person name="Tagami M."/>
            <person name="Waki K."/>
            <person name="Watahiki A."/>
            <person name="Okamura-Oho Y."/>
            <person name="Suzuki H."/>
            <person name="Kawai J."/>
            <person name="Hayashizaki Y."/>
        </authorList>
    </citation>
    <scope>NUCLEOTIDE SEQUENCE [LARGE SCALE MRNA] (ISOFORM 3)</scope>
    <source>
        <strain>C57BL/6J</strain>
        <tissue>Thymus</tissue>
    </source>
</reference>
<reference key="2">
    <citation type="journal article" date="2009" name="PLoS Biol.">
        <title>Lineage-specific biology revealed by a finished genome assembly of the mouse.</title>
        <authorList>
            <person name="Church D.M."/>
            <person name="Goodstadt L."/>
            <person name="Hillier L.W."/>
            <person name="Zody M.C."/>
            <person name="Goldstein S."/>
            <person name="She X."/>
            <person name="Bult C.J."/>
            <person name="Agarwala R."/>
            <person name="Cherry J.L."/>
            <person name="DiCuccio M."/>
            <person name="Hlavina W."/>
            <person name="Kapustin Y."/>
            <person name="Meric P."/>
            <person name="Maglott D."/>
            <person name="Birtle Z."/>
            <person name="Marques A.C."/>
            <person name="Graves T."/>
            <person name="Zhou S."/>
            <person name="Teague B."/>
            <person name="Potamousis K."/>
            <person name="Churas C."/>
            <person name="Place M."/>
            <person name="Herschleb J."/>
            <person name="Runnheim R."/>
            <person name="Forrest D."/>
            <person name="Amos-Landgraf J."/>
            <person name="Schwartz D.C."/>
            <person name="Cheng Z."/>
            <person name="Lindblad-Toh K."/>
            <person name="Eichler E.E."/>
            <person name="Ponting C.P."/>
        </authorList>
    </citation>
    <scope>NUCLEOTIDE SEQUENCE [LARGE SCALE GENOMIC DNA]</scope>
    <source>
        <strain>C57BL/6J</strain>
    </source>
</reference>
<reference key="3">
    <citation type="journal article" date="2004" name="Genome Res.">
        <title>The status, quality, and expansion of the NIH full-length cDNA project: the Mammalian Gene Collection (MGC).</title>
        <authorList>
            <consortium name="The MGC Project Team"/>
        </authorList>
    </citation>
    <scope>NUCLEOTIDE SEQUENCE [LARGE SCALE MRNA] (ISOFORM 2)</scope>
    <source>
        <strain>C57BL/6J</strain>
        <tissue>Eye</tissue>
    </source>
</reference>
<reference key="4">
    <citation type="journal article" date="2010" name="Cell">
        <title>A tissue-specific atlas of mouse protein phosphorylation and expression.</title>
        <authorList>
            <person name="Huttlin E.L."/>
            <person name="Jedrychowski M.P."/>
            <person name="Elias J.E."/>
            <person name="Goswami T."/>
            <person name="Rad R."/>
            <person name="Beausoleil S.A."/>
            <person name="Villen J."/>
            <person name="Haas W."/>
            <person name="Sowa M.E."/>
            <person name="Gygi S.P."/>
        </authorList>
    </citation>
    <scope>IDENTIFICATION BY MASS SPECTROMETRY [LARGE SCALE ANALYSIS]</scope>
    <source>
        <tissue>Spleen</tissue>
    </source>
</reference>
<reference key="5">
    <citation type="journal article" date="2013" name="Cell">
        <title>Dynamic readers for 5-(hydroxy)methylcytosine and its oxidized derivatives.</title>
        <authorList>
            <person name="Spruijt C.G."/>
            <person name="Gnerlich F."/>
            <person name="Smits A.H."/>
            <person name="Pfaffeneder T."/>
            <person name="Jansen P.W."/>
            <person name="Bauer C."/>
            <person name="Munzel M."/>
            <person name="Wagner M."/>
            <person name="Muller M."/>
            <person name="Khan F."/>
            <person name="Eberl H.C."/>
            <person name="Mensinga A."/>
            <person name="Brinkman A.B."/>
            <person name="Lephikov K."/>
            <person name="Muller U."/>
            <person name="Walter J."/>
            <person name="Boelens R."/>
            <person name="van Ingen H."/>
            <person name="Leonhardt H."/>
            <person name="Carell T."/>
            <person name="Vermeulen M."/>
        </authorList>
    </citation>
    <scope>FUNCTION</scope>
</reference>
<evidence type="ECO:0000250" key="1"/>
<evidence type="ECO:0000256" key="2">
    <source>
        <dbReference type="SAM" id="MobiDB-lite"/>
    </source>
</evidence>
<evidence type="ECO:0000269" key="3">
    <source>
    </source>
</evidence>
<evidence type="ECO:0000303" key="4">
    <source>
    </source>
</evidence>
<evidence type="ECO:0000303" key="5">
    <source>
    </source>
</evidence>
<evidence type="ECO:0000305" key="6"/>
<sequence>MSGSKAESEEKAGSKQCPLVQVNEYKENEHIAYTSLRPIQITTLRKTAKVYLYPFSLSNSKLGLLKLSKSPVVNNSSKSVVHKKKDRKKTRRKVLTSKMKALSSKADSLLLKSSVDAYTESTRLGPKRTSDSATLSVDAESSDEDSAPGLDDFSGLSPYERKRLRNIRENANFFASLQLAESAARLRGMIKKRESPESKRKRPKKKENEIGCRRSMRLLKVDPLGVSLPASPTQPTLVEEEENPLLPPGPLEMIPENQDDSSELLKASLKTWAEMSQTSNEKTKKGLSSIKSYKANLSGMVISEATVRKVTKGAISSVALHPSEVRTLVAAGAKSGQIGLWDLTQQSEDAMYVFYAHSRYVSCLSFSPTNPAHLLSLSYDGTLRCGDFSSAVFEEVYRNEGNSPSSFDFLNDSSSLLVGHWDGHLSLVDRRTPGTSYEKFFNSSLEKIRTVHVHPLSRQYFVTAGLRDVHVYDARFLKSRGSQPLISLTEHSKSIASAYFSPVTGNRVVTTCADCKLRVFDSSSISSQLPLLSTIRHNTVTGRWLTRFQAVWDPKQEDCFIVGSMDHPRRVEVFHESGKNVHSLWGECLVSVCSLSAVHPTRYILAGGNSSGKLHVFMHQET</sequence>
<organism>
    <name type="scientific">Mus musculus</name>
    <name type="common">Mouse</name>
    <dbReference type="NCBI Taxonomy" id="10090"/>
    <lineage>
        <taxon>Eukaryota</taxon>
        <taxon>Metazoa</taxon>
        <taxon>Chordata</taxon>
        <taxon>Craniata</taxon>
        <taxon>Vertebrata</taxon>
        <taxon>Euteleostomi</taxon>
        <taxon>Mammalia</taxon>
        <taxon>Eutheria</taxon>
        <taxon>Euarchontoglires</taxon>
        <taxon>Glires</taxon>
        <taxon>Rodentia</taxon>
        <taxon>Myomorpha</taxon>
        <taxon>Muroidea</taxon>
        <taxon>Muridae</taxon>
        <taxon>Murinae</taxon>
        <taxon>Mus</taxon>
        <taxon>Mus</taxon>
    </lineage>
</organism>
<dbReference type="EMBL" id="AK020004">
    <property type="protein sequence ID" value="BAB31961.2"/>
    <property type="molecule type" value="mRNA"/>
</dbReference>
<dbReference type="EMBL" id="AL928678">
    <property type="status" value="NOT_ANNOTATED_CDS"/>
    <property type="molecule type" value="Genomic_DNA"/>
</dbReference>
<dbReference type="EMBL" id="BC094676">
    <property type="protein sequence ID" value="AAH94676.1"/>
    <property type="molecule type" value="mRNA"/>
</dbReference>
<dbReference type="EMBL" id="BC117822">
    <property type="protein sequence ID" value="AAI17823.1"/>
    <property type="molecule type" value="mRNA"/>
</dbReference>
<dbReference type="CCDS" id="CCDS38218.1">
    <molecule id="A6PWY4-2"/>
</dbReference>
<dbReference type="CCDS" id="CCDS89546.1">
    <molecule id="A6PWY4-1"/>
</dbReference>
<dbReference type="RefSeq" id="NP_001277915.1">
    <molecule id="A6PWY4-2"/>
    <property type="nucleotide sequence ID" value="NM_001290986.1"/>
</dbReference>
<dbReference type="RefSeq" id="NP_001277916.1">
    <property type="nucleotide sequence ID" value="NM_001290987.1"/>
</dbReference>
<dbReference type="RefSeq" id="NP_001356114.1">
    <molecule id="A6PWY4-1"/>
    <property type="nucleotide sequence ID" value="NM_001369185.1"/>
</dbReference>
<dbReference type="RefSeq" id="NP_084510.2">
    <molecule id="A6PWY4-2"/>
    <property type="nucleotide sequence ID" value="NM_030234.2"/>
</dbReference>
<dbReference type="RefSeq" id="XP_006499556.1">
    <property type="nucleotide sequence ID" value="XM_006499493.3"/>
</dbReference>
<dbReference type="SMR" id="A6PWY4"/>
<dbReference type="BioGRID" id="232333">
    <property type="interactions" value="8"/>
</dbReference>
<dbReference type="DIP" id="DIP-59892N"/>
<dbReference type="FunCoup" id="A6PWY4">
    <property type="interactions" value="1706"/>
</dbReference>
<dbReference type="IntAct" id="A6PWY4">
    <property type="interactions" value="2"/>
</dbReference>
<dbReference type="STRING" id="10090.ENSMUSP00000106232"/>
<dbReference type="GlyGen" id="A6PWY4">
    <property type="glycosylation" value="1 site"/>
</dbReference>
<dbReference type="iPTMnet" id="A6PWY4"/>
<dbReference type="PhosphoSitePlus" id="A6PWY4"/>
<dbReference type="PaxDb" id="10090-ENSMUSP00000028676"/>
<dbReference type="PeptideAtlas" id="A6PWY4"/>
<dbReference type="ProteomicsDB" id="299751">
    <molecule id="A6PWY4-1"/>
</dbReference>
<dbReference type="ProteomicsDB" id="299752">
    <molecule id="A6PWY4-2"/>
</dbReference>
<dbReference type="ProteomicsDB" id="299753">
    <molecule id="A6PWY4-3"/>
</dbReference>
<dbReference type="Pumba" id="A6PWY4"/>
<dbReference type="Antibodypedia" id="52296">
    <property type="antibodies" value="77 antibodies from 21 providers"/>
</dbReference>
<dbReference type="Ensembl" id="ENSMUST00000028676.12">
    <molecule id="A6PWY4-2"/>
    <property type="protein sequence ID" value="ENSMUSP00000028676.6"/>
    <property type="gene ID" value="ENSMUSG00000027242.15"/>
</dbReference>
<dbReference type="Ensembl" id="ENSMUST00000110602.9">
    <molecule id="A6PWY4-2"/>
    <property type="protein sequence ID" value="ENSMUSP00000106232.3"/>
    <property type="gene ID" value="ENSMUSG00000027242.15"/>
</dbReference>
<dbReference type="Ensembl" id="ENSMUST00000110603.2">
    <molecule id="A6PWY4-1"/>
    <property type="protein sequence ID" value="ENSMUSP00000106234.2"/>
    <property type="gene ID" value="ENSMUSG00000027242.15"/>
</dbReference>
<dbReference type="GeneID" id="241627"/>
<dbReference type="KEGG" id="mmu:241627"/>
<dbReference type="UCSC" id="uc008lzi.1">
    <molecule id="A6PWY4-2"/>
    <property type="organism name" value="mouse"/>
</dbReference>
<dbReference type="UCSC" id="uc008lzj.1">
    <molecule id="A6PWY4-1"/>
    <property type="organism name" value="mouse"/>
</dbReference>
<dbReference type="AGR" id="MGI:1926186"/>
<dbReference type="CTD" id="79968"/>
<dbReference type="MGI" id="MGI:1926186">
    <property type="gene designation" value="Wdr76"/>
</dbReference>
<dbReference type="VEuPathDB" id="HostDB:ENSMUSG00000027242"/>
<dbReference type="eggNOG" id="KOG4328">
    <property type="taxonomic scope" value="Eukaryota"/>
</dbReference>
<dbReference type="GeneTree" id="ENSGT00510000048144"/>
<dbReference type="HOGENOM" id="CLU_017019_0_0_1"/>
<dbReference type="InParanoid" id="A6PWY4"/>
<dbReference type="OMA" id="DPNTLYW"/>
<dbReference type="OrthoDB" id="9890280at2759"/>
<dbReference type="PhylomeDB" id="A6PWY4"/>
<dbReference type="TreeFam" id="TF314788"/>
<dbReference type="BioGRID-ORCS" id="241627">
    <property type="hits" value="1 hit in 63 CRISPR screens"/>
</dbReference>
<dbReference type="ChiTaRS" id="Wdr76">
    <property type="organism name" value="mouse"/>
</dbReference>
<dbReference type="PRO" id="PR:A6PWY4"/>
<dbReference type="Proteomes" id="UP000000589">
    <property type="component" value="Chromosome 2"/>
</dbReference>
<dbReference type="RNAct" id="A6PWY4">
    <property type="molecule type" value="protein"/>
</dbReference>
<dbReference type="Bgee" id="ENSMUSG00000027242">
    <property type="expression patterns" value="Expressed in animal zygote and 145 other cell types or tissues"/>
</dbReference>
<dbReference type="ExpressionAtlas" id="A6PWY4">
    <property type="expression patterns" value="baseline and differential"/>
</dbReference>
<dbReference type="GO" id="GO:0000792">
    <property type="term" value="C:heterochromatin"/>
    <property type="evidence" value="ECO:0000250"/>
    <property type="project" value="UniProtKB"/>
</dbReference>
<dbReference type="GO" id="GO:0005634">
    <property type="term" value="C:nucleus"/>
    <property type="evidence" value="ECO:0000250"/>
    <property type="project" value="UniProtKB"/>
</dbReference>
<dbReference type="GO" id="GO:0090734">
    <property type="term" value="C:site of DNA damage"/>
    <property type="evidence" value="ECO:0000250"/>
    <property type="project" value="UniProtKB"/>
</dbReference>
<dbReference type="GO" id="GO:0019899">
    <property type="term" value="F:enzyme binding"/>
    <property type="evidence" value="ECO:0007669"/>
    <property type="project" value="Ensembl"/>
</dbReference>
<dbReference type="GO" id="GO:0006974">
    <property type="term" value="P:DNA damage response"/>
    <property type="evidence" value="ECO:0000250"/>
    <property type="project" value="UniProtKB"/>
</dbReference>
<dbReference type="FunFam" id="2.130.10.10:FF:000180">
    <property type="entry name" value="WD repeat-containing protein 76"/>
    <property type="match status" value="1"/>
</dbReference>
<dbReference type="Gene3D" id="2.130.10.10">
    <property type="entry name" value="YVTN repeat-like/Quinoprotein amine dehydrogenase"/>
    <property type="match status" value="1"/>
</dbReference>
<dbReference type="InterPro" id="IPR015943">
    <property type="entry name" value="WD40/YVTN_repeat-like_dom_sf"/>
</dbReference>
<dbReference type="InterPro" id="IPR036322">
    <property type="entry name" value="WD40_repeat_dom_sf"/>
</dbReference>
<dbReference type="InterPro" id="IPR001680">
    <property type="entry name" value="WD40_rpt"/>
</dbReference>
<dbReference type="InterPro" id="IPR050853">
    <property type="entry name" value="WD_repeat_DNA-damage-binding"/>
</dbReference>
<dbReference type="PANTHER" id="PTHR14773">
    <property type="entry name" value="WD REPEAT-CONTAINING PROTEIN 76"/>
    <property type="match status" value="1"/>
</dbReference>
<dbReference type="PANTHER" id="PTHR14773:SF0">
    <property type="entry name" value="WD REPEAT-CONTAINING PROTEIN 76"/>
    <property type="match status" value="1"/>
</dbReference>
<dbReference type="Pfam" id="PF00400">
    <property type="entry name" value="WD40"/>
    <property type="match status" value="2"/>
</dbReference>
<dbReference type="SMART" id="SM00320">
    <property type="entry name" value="WD40"/>
    <property type="match status" value="6"/>
</dbReference>
<dbReference type="SUPFAM" id="SSF50978">
    <property type="entry name" value="WD40 repeat-like"/>
    <property type="match status" value="1"/>
</dbReference>
<dbReference type="PROSITE" id="PS50294">
    <property type="entry name" value="WD_REPEATS_REGION"/>
    <property type="match status" value="1"/>
</dbReference>
<accession>A6PWY4</accession>
<accession>A2ASQ8</accession>
<accession>A4FUV0</accession>
<accession>Q504Z3</accession>
<accession>Q9CTV4</accession>
<name>WDR76_MOUSE</name>